<keyword id="KW-0004">4Fe-4S</keyword>
<keyword id="KW-0408">Iron</keyword>
<keyword id="KW-0411">Iron-sulfur</keyword>
<keyword id="KW-0479">Metal-binding</keyword>
<keyword id="KW-0496">Mitochondrion</keyword>
<keyword id="KW-1185">Reference proteome</keyword>
<keyword id="KW-0949">S-adenosyl-L-methionine</keyword>
<keyword id="KW-0808">Transferase</keyword>
<keyword id="KW-0809">Transit peptide</keyword>
<feature type="transit peptide" description="Mitochondrion" evidence="1">
    <location>
        <begin position="1"/>
        <end position="29"/>
    </location>
</feature>
<feature type="chain" id="PRO_0000398275" description="Lipoyl synthase, mitochondrial">
    <location>
        <begin position="30"/>
        <end position="430"/>
    </location>
</feature>
<feature type="domain" description="Radical SAM core" evidence="2">
    <location>
        <begin position="156"/>
        <end position="379"/>
    </location>
</feature>
<feature type="region of interest" description="Disordered" evidence="3">
    <location>
        <begin position="28"/>
        <end position="62"/>
    </location>
</feature>
<feature type="compositionally biased region" description="Low complexity" evidence="3">
    <location>
        <begin position="28"/>
        <end position="58"/>
    </location>
</feature>
<feature type="binding site" evidence="1">
    <location>
        <position position="142"/>
    </location>
    <ligand>
        <name>[4Fe-4S] cluster</name>
        <dbReference type="ChEBI" id="CHEBI:49883"/>
        <label>1</label>
    </ligand>
</feature>
<feature type="binding site" evidence="1">
    <location>
        <position position="147"/>
    </location>
    <ligand>
        <name>[4Fe-4S] cluster</name>
        <dbReference type="ChEBI" id="CHEBI:49883"/>
        <label>1</label>
    </ligand>
</feature>
<feature type="binding site" evidence="1">
    <location>
        <position position="153"/>
    </location>
    <ligand>
        <name>[4Fe-4S] cluster</name>
        <dbReference type="ChEBI" id="CHEBI:49883"/>
        <label>1</label>
    </ligand>
</feature>
<feature type="binding site" evidence="1">
    <location>
        <position position="173"/>
    </location>
    <ligand>
        <name>[4Fe-4S] cluster</name>
        <dbReference type="ChEBI" id="CHEBI:49883"/>
        <label>2</label>
        <note>4Fe-4S-S-AdoMet</note>
    </ligand>
</feature>
<feature type="binding site" evidence="1">
    <location>
        <position position="177"/>
    </location>
    <ligand>
        <name>[4Fe-4S] cluster</name>
        <dbReference type="ChEBI" id="CHEBI:49883"/>
        <label>2</label>
        <note>4Fe-4S-S-AdoMet</note>
    </ligand>
</feature>
<feature type="binding site" evidence="1">
    <location>
        <position position="180"/>
    </location>
    <ligand>
        <name>[4Fe-4S] cluster</name>
        <dbReference type="ChEBI" id="CHEBI:49883"/>
        <label>2</label>
        <note>4Fe-4S-S-AdoMet</note>
    </ligand>
</feature>
<feature type="binding site" evidence="1">
    <location>
        <position position="390"/>
    </location>
    <ligand>
        <name>[4Fe-4S] cluster</name>
        <dbReference type="ChEBI" id="CHEBI:49883"/>
        <label>1</label>
    </ligand>
</feature>
<accession>Q7SF84</accession>
<sequence>MASPVPIQRLQAPLRRSLARAAALSTRSYATIPSGPSSQPTSQESSSAASASAPATKPRPTYFKDTTLASLDDFIANQSSAAPLAPSEAYTLRTAEVGPAGKKRTITRLPEWLKTPIPSAGANPEFAKIKADLRGLNLHTVCEEARCPNIGECWGGSNKAAATATIMLMGDTCTRGCRFCSVKTSRKPPPLDPHEPENTAEALARWGLGYVVLTSVDRDDLADGGARHFAETIRRIKQKKPTLLVEALTGDFAGDLDMVKIVAESGLDVYAHNVETVENLTPYVRDRRATFRQSLKVLEHVKKVRGKEGIITKTSIMLGLGETEEELWEALRELRKVDVDVVTFGQYMRPTKRHLAVEKYITPDEFELWRQRALDMGFLYCASGPLVRSSYKAGEAFIENVLRKRSGEKVVSEALGQAVAAEEATSVQSS</sequence>
<name>LIPA_NEUCR</name>
<proteinExistence type="inferred from homology"/>
<evidence type="ECO:0000255" key="1">
    <source>
        <dbReference type="HAMAP-Rule" id="MF_03123"/>
    </source>
</evidence>
<evidence type="ECO:0000255" key="2">
    <source>
        <dbReference type="PROSITE-ProRule" id="PRU01266"/>
    </source>
</evidence>
<evidence type="ECO:0000256" key="3">
    <source>
        <dbReference type="SAM" id="MobiDB-lite"/>
    </source>
</evidence>
<comment type="function">
    <text evidence="1">Catalyzes the radical-mediated insertion of two sulfur atoms into the C-6 and C-8 positions of the octanoyl moiety bound to the lipoyl domains of lipoate-dependent enzymes, thereby converting the octanoylated domains into lipoylated derivatives.</text>
</comment>
<comment type="catalytic activity">
    <reaction evidence="1">
        <text>[[Fe-S] cluster scaffold protein carrying a second [4Fe-4S](2+) cluster] + N(6)-octanoyl-L-lysyl-[protein] + 2 oxidized [2Fe-2S]-[ferredoxin] + 2 S-adenosyl-L-methionine + 4 H(+) = [[Fe-S] cluster scaffold protein] + N(6)-[(R)-dihydrolipoyl]-L-lysyl-[protein] + 4 Fe(3+) + 2 hydrogen sulfide + 2 5'-deoxyadenosine + 2 L-methionine + 2 reduced [2Fe-2S]-[ferredoxin]</text>
        <dbReference type="Rhea" id="RHEA:16585"/>
        <dbReference type="Rhea" id="RHEA-COMP:9928"/>
        <dbReference type="Rhea" id="RHEA-COMP:10000"/>
        <dbReference type="Rhea" id="RHEA-COMP:10001"/>
        <dbReference type="Rhea" id="RHEA-COMP:10475"/>
        <dbReference type="Rhea" id="RHEA-COMP:14568"/>
        <dbReference type="Rhea" id="RHEA-COMP:14569"/>
        <dbReference type="ChEBI" id="CHEBI:15378"/>
        <dbReference type="ChEBI" id="CHEBI:17319"/>
        <dbReference type="ChEBI" id="CHEBI:29034"/>
        <dbReference type="ChEBI" id="CHEBI:29919"/>
        <dbReference type="ChEBI" id="CHEBI:33722"/>
        <dbReference type="ChEBI" id="CHEBI:33737"/>
        <dbReference type="ChEBI" id="CHEBI:33738"/>
        <dbReference type="ChEBI" id="CHEBI:57844"/>
        <dbReference type="ChEBI" id="CHEBI:59789"/>
        <dbReference type="ChEBI" id="CHEBI:78809"/>
        <dbReference type="ChEBI" id="CHEBI:83100"/>
        <dbReference type="EC" id="2.8.1.8"/>
    </reaction>
</comment>
<comment type="cofactor">
    <cofactor evidence="1">
        <name>[4Fe-4S] cluster</name>
        <dbReference type="ChEBI" id="CHEBI:49883"/>
    </cofactor>
    <text evidence="1">Binds 2 [4Fe-4S] clusters per subunit. One cluster is coordinated with 3 cysteines and an exchangeable S-adenosyl-L-methionine.</text>
</comment>
<comment type="pathway">
    <text evidence="1">Protein modification; protein lipoylation via endogenous pathway; protein N(6)-(lipoyl)lysine from octanoyl-[acyl-carrier-protein]: step 2/2.</text>
</comment>
<comment type="subcellular location">
    <subcellularLocation>
        <location evidence="1">Mitochondrion</location>
    </subcellularLocation>
</comment>
<comment type="similarity">
    <text evidence="1">Belongs to the radical SAM superfamily. Lipoyl synthase family.</text>
</comment>
<organism>
    <name type="scientific">Neurospora crassa (strain ATCC 24698 / 74-OR23-1A / CBS 708.71 / DSM 1257 / FGSC 987)</name>
    <dbReference type="NCBI Taxonomy" id="367110"/>
    <lineage>
        <taxon>Eukaryota</taxon>
        <taxon>Fungi</taxon>
        <taxon>Dikarya</taxon>
        <taxon>Ascomycota</taxon>
        <taxon>Pezizomycotina</taxon>
        <taxon>Sordariomycetes</taxon>
        <taxon>Sordariomycetidae</taxon>
        <taxon>Sordariales</taxon>
        <taxon>Sordariaceae</taxon>
        <taxon>Neurospora</taxon>
    </lineage>
</organism>
<gene>
    <name type="ORF">NCU00565</name>
</gene>
<dbReference type="EC" id="2.8.1.8" evidence="1"/>
<dbReference type="EMBL" id="CM002236">
    <property type="protein sequence ID" value="EAA35490.1"/>
    <property type="molecule type" value="Genomic_DNA"/>
</dbReference>
<dbReference type="RefSeq" id="XP_964726.1">
    <property type="nucleotide sequence ID" value="XM_959633.3"/>
</dbReference>
<dbReference type="SMR" id="Q7SF84"/>
<dbReference type="FunCoup" id="Q7SF84">
    <property type="interactions" value="575"/>
</dbReference>
<dbReference type="STRING" id="367110.Q7SF84"/>
<dbReference type="PaxDb" id="5141-EFNCRP00000000796"/>
<dbReference type="EnsemblFungi" id="EAA35490">
    <property type="protein sequence ID" value="EAA35490"/>
    <property type="gene ID" value="NCU00565"/>
</dbReference>
<dbReference type="GeneID" id="3880875"/>
<dbReference type="KEGG" id="ncr:NCU00565"/>
<dbReference type="VEuPathDB" id="FungiDB:NCU00565"/>
<dbReference type="HOGENOM" id="CLU_033144_0_1_1"/>
<dbReference type="InParanoid" id="Q7SF84"/>
<dbReference type="OrthoDB" id="3231at2759"/>
<dbReference type="UniPathway" id="UPA00538">
    <property type="reaction ID" value="UER00593"/>
</dbReference>
<dbReference type="Proteomes" id="UP000001805">
    <property type="component" value="Chromosome 1, Linkage Group I"/>
</dbReference>
<dbReference type="GO" id="GO:0005739">
    <property type="term" value="C:mitochondrion"/>
    <property type="evidence" value="ECO:0000318"/>
    <property type="project" value="GO_Central"/>
</dbReference>
<dbReference type="GO" id="GO:0051539">
    <property type="term" value="F:4 iron, 4 sulfur cluster binding"/>
    <property type="evidence" value="ECO:0007669"/>
    <property type="project" value="UniProtKB-UniRule"/>
</dbReference>
<dbReference type="GO" id="GO:0016992">
    <property type="term" value="F:lipoate synthase activity"/>
    <property type="evidence" value="ECO:0000318"/>
    <property type="project" value="GO_Central"/>
</dbReference>
<dbReference type="GO" id="GO:0046872">
    <property type="term" value="F:metal ion binding"/>
    <property type="evidence" value="ECO:0007669"/>
    <property type="project" value="UniProtKB-KW"/>
</dbReference>
<dbReference type="GO" id="GO:0009107">
    <property type="term" value="P:lipoate biosynthetic process"/>
    <property type="evidence" value="ECO:0000318"/>
    <property type="project" value="GO_Central"/>
</dbReference>
<dbReference type="CDD" id="cd01335">
    <property type="entry name" value="Radical_SAM"/>
    <property type="match status" value="1"/>
</dbReference>
<dbReference type="FunFam" id="3.20.20.70:FF:000036">
    <property type="entry name" value="Lipoyl synthase, mitochondrial"/>
    <property type="match status" value="1"/>
</dbReference>
<dbReference type="Gene3D" id="3.20.20.70">
    <property type="entry name" value="Aldolase class I"/>
    <property type="match status" value="1"/>
</dbReference>
<dbReference type="HAMAP" id="MF_00206">
    <property type="entry name" value="Lipoyl_synth"/>
    <property type="match status" value="1"/>
</dbReference>
<dbReference type="InterPro" id="IPR013785">
    <property type="entry name" value="Aldolase_TIM"/>
</dbReference>
<dbReference type="InterPro" id="IPR006638">
    <property type="entry name" value="Elp3/MiaA/NifB-like_rSAM"/>
</dbReference>
<dbReference type="InterPro" id="IPR031691">
    <property type="entry name" value="LIAS_N"/>
</dbReference>
<dbReference type="InterPro" id="IPR003698">
    <property type="entry name" value="Lipoyl_synth"/>
</dbReference>
<dbReference type="InterPro" id="IPR007197">
    <property type="entry name" value="rSAM"/>
</dbReference>
<dbReference type="NCBIfam" id="TIGR00510">
    <property type="entry name" value="lipA"/>
    <property type="match status" value="1"/>
</dbReference>
<dbReference type="NCBIfam" id="NF004019">
    <property type="entry name" value="PRK05481.1"/>
    <property type="match status" value="1"/>
</dbReference>
<dbReference type="NCBIfam" id="NF009544">
    <property type="entry name" value="PRK12928.1"/>
    <property type="match status" value="1"/>
</dbReference>
<dbReference type="PANTHER" id="PTHR10949">
    <property type="entry name" value="LIPOYL SYNTHASE"/>
    <property type="match status" value="1"/>
</dbReference>
<dbReference type="PANTHER" id="PTHR10949:SF0">
    <property type="entry name" value="LIPOYL SYNTHASE, MITOCHONDRIAL"/>
    <property type="match status" value="1"/>
</dbReference>
<dbReference type="Pfam" id="PF16881">
    <property type="entry name" value="LIAS_N"/>
    <property type="match status" value="1"/>
</dbReference>
<dbReference type="Pfam" id="PF04055">
    <property type="entry name" value="Radical_SAM"/>
    <property type="match status" value="1"/>
</dbReference>
<dbReference type="SFLD" id="SFLDF00271">
    <property type="entry name" value="lipoyl_synthase"/>
    <property type="match status" value="1"/>
</dbReference>
<dbReference type="SFLD" id="SFLDG01058">
    <property type="entry name" value="lipoyl_synthase_like"/>
    <property type="match status" value="1"/>
</dbReference>
<dbReference type="SMART" id="SM00729">
    <property type="entry name" value="Elp3"/>
    <property type="match status" value="1"/>
</dbReference>
<dbReference type="SUPFAM" id="SSF102114">
    <property type="entry name" value="Radical SAM enzymes"/>
    <property type="match status" value="1"/>
</dbReference>
<dbReference type="PROSITE" id="PS51918">
    <property type="entry name" value="RADICAL_SAM"/>
    <property type="match status" value="1"/>
</dbReference>
<protein>
    <recommendedName>
        <fullName evidence="1">Lipoyl synthase, mitochondrial</fullName>
        <ecNumber evidence="1">2.8.1.8</ecNumber>
    </recommendedName>
    <alternativeName>
        <fullName evidence="1">Lipoate synthase</fullName>
        <shortName evidence="1">LS</shortName>
        <shortName evidence="1">Lip-syn</shortName>
    </alternativeName>
    <alternativeName>
        <fullName evidence="1">Lipoic acid synthase</fullName>
    </alternativeName>
</protein>
<reference key="1">
    <citation type="journal article" date="2003" name="Nature">
        <title>The genome sequence of the filamentous fungus Neurospora crassa.</title>
        <authorList>
            <person name="Galagan J.E."/>
            <person name="Calvo S.E."/>
            <person name="Borkovich K.A."/>
            <person name="Selker E.U."/>
            <person name="Read N.D."/>
            <person name="Jaffe D.B."/>
            <person name="FitzHugh W."/>
            <person name="Ma L.-J."/>
            <person name="Smirnov S."/>
            <person name="Purcell S."/>
            <person name="Rehman B."/>
            <person name="Elkins T."/>
            <person name="Engels R."/>
            <person name="Wang S."/>
            <person name="Nielsen C.B."/>
            <person name="Butler J."/>
            <person name="Endrizzi M."/>
            <person name="Qui D."/>
            <person name="Ianakiev P."/>
            <person name="Bell-Pedersen D."/>
            <person name="Nelson M.A."/>
            <person name="Werner-Washburne M."/>
            <person name="Selitrennikoff C.P."/>
            <person name="Kinsey J.A."/>
            <person name="Braun E.L."/>
            <person name="Zelter A."/>
            <person name="Schulte U."/>
            <person name="Kothe G.O."/>
            <person name="Jedd G."/>
            <person name="Mewes H.-W."/>
            <person name="Staben C."/>
            <person name="Marcotte E."/>
            <person name="Greenberg D."/>
            <person name="Roy A."/>
            <person name="Foley K."/>
            <person name="Naylor J."/>
            <person name="Stange-Thomann N."/>
            <person name="Barrett R."/>
            <person name="Gnerre S."/>
            <person name="Kamal M."/>
            <person name="Kamvysselis M."/>
            <person name="Mauceli E.W."/>
            <person name="Bielke C."/>
            <person name="Rudd S."/>
            <person name="Frishman D."/>
            <person name="Krystofova S."/>
            <person name="Rasmussen C."/>
            <person name="Metzenberg R.L."/>
            <person name="Perkins D.D."/>
            <person name="Kroken S."/>
            <person name="Cogoni C."/>
            <person name="Macino G."/>
            <person name="Catcheside D.E.A."/>
            <person name="Li W."/>
            <person name="Pratt R.J."/>
            <person name="Osmani S.A."/>
            <person name="DeSouza C.P.C."/>
            <person name="Glass N.L."/>
            <person name="Orbach M.J."/>
            <person name="Berglund J.A."/>
            <person name="Voelker R."/>
            <person name="Yarden O."/>
            <person name="Plamann M."/>
            <person name="Seiler S."/>
            <person name="Dunlap J.C."/>
            <person name="Radford A."/>
            <person name="Aramayo R."/>
            <person name="Natvig D.O."/>
            <person name="Alex L.A."/>
            <person name="Mannhaupt G."/>
            <person name="Ebbole D.J."/>
            <person name="Freitag M."/>
            <person name="Paulsen I."/>
            <person name="Sachs M.S."/>
            <person name="Lander E.S."/>
            <person name="Nusbaum C."/>
            <person name="Birren B.W."/>
        </authorList>
    </citation>
    <scope>NUCLEOTIDE SEQUENCE [LARGE SCALE GENOMIC DNA]</scope>
    <source>
        <strain>ATCC 24698 / 74-OR23-1A / CBS 708.71 / DSM 1257 / FGSC 987</strain>
    </source>
</reference>